<evidence type="ECO:0000255" key="1">
    <source>
        <dbReference type="HAMAP-Rule" id="MF_00536"/>
    </source>
</evidence>
<evidence type="ECO:0000305" key="2"/>
<reference key="1">
    <citation type="journal article" date="2000" name="Science">
        <title>Complete genome sequence of Neisseria meningitidis serogroup B strain MC58.</title>
        <authorList>
            <person name="Tettelin H."/>
            <person name="Saunders N.J."/>
            <person name="Heidelberg J.F."/>
            <person name="Jeffries A.C."/>
            <person name="Nelson K.E."/>
            <person name="Eisen J.A."/>
            <person name="Ketchum K.A."/>
            <person name="Hood D.W."/>
            <person name="Peden J.F."/>
            <person name="Dodson R.J."/>
            <person name="Nelson W.C."/>
            <person name="Gwinn M.L."/>
            <person name="DeBoy R.T."/>
            <person name="Peterson J.D."/>
            <person name="Hickey E.K."/>
            <person name="Haft D.H."/>
            <person name="Salzberg S.L."/>
            <person name="White O."/>
            <person name="Fleischmann R.D."/>
            <person name="Dougherty B.A."/>
            <person name="Mason T.M."/>
            <person name="Ciecko A."/>
            <person name="Parksey D.S."/>
            <person name="Blair E."/>
            <person name="Cittone H."/>
            <person name="Clark E.B."/>
            <person name="Cotton M.D."/>
            <person name="Utterback T.R."/>
            <person name="Khouri H.M."/>
            <person name="Qin H."/>
            <person name="Vamathevan J.J."/>
            <person name="Gill J."/>
            <person name="Scarlato V."/>
            <person name="Masignani V."/>
            <person name="Pizza M."/>
            <person name="Grandi G."/>
            <person name="Sun L."/>
            <person name="Smith H.O."/>
            <person name="Fraser C.M."/>
            <person name="Moxon E.R."/>
            <person name="Rappuoli R."/>
            <person name="Venter J.C."/>
        </authorList>
    </citation>
    <scope>NUCLEOTIDE SEQUENCE [LARGE SCALE GENOMIC DNA]</scope>
    <source>
        <strain>ATCC BAA-335 / MC58</strain>
    </source>
</reference>
<accession>Q9K1F9</accession>
<dbReference type="EC" id="1.1.1.262" evidence="1"/>
<dbReference type="EMBL" id="AE002098">
    <property type="protein sequence ID" value="AAF40652.1"/>
    <property type="status" value="ALT_INIT"/>
    <property type="molecule type" value="Genomic_DNA"/>
</dbReference>
<dbReference type="PIR" id="H81227">
    <property type="entry name" value="H81227"/>
</dbReference>
<dbReference type="RefSeq" id="NP_273253.1">
    <property type="nucleotide sequence ID" value="NC_003112.2"/>
</dbReference>
<dbReference type="RefSeq" id="WP_002221872.1">
    <property type="nucleotide sequence ID" value="NC_003112.2"/>
</dbReference>
<dbReference type="SMR" id="Q9K1F9"/>
<dbReference type="FunCoup" id="Q9K1F9">
    <property type="interactions" value="272"/>
</dbReference>
<dbReference type="STRING" id="122586.NMB0195"/>
<dbReference type="PaxDb" id="122586-NMB0195"/>
<dbReference type="KEGG" id="nme:NMB0195"/>
<dbReference type="PATRIC" id="fig|122586.8.peg.240"/>
<dbReference type="HOGENOM" id="CLU_040168_1_0_4"/>
<dbReference type="InParanoid" id="Q9K1F9"/>
<dbReference type="OrthoDB" id="9801783at2"/>
<dbReference type="UniPathway" id="UPA00244">
    <property type="reaction ID" value="UER00312"/>
</dbReference>
<dbReference type="Proteomes" id="UP000000425">
    <property type="component" value="Chromosome"/>
</dbReference>
<dbReference type="GO" id="GO:0005737">
    <property type="term" value="C:cytoplasm"/>
    <property type="evidence" value="ECO:0007669"/>
    <property type="project" value="UniProtKB-SubCell"/>
</dbReference>
<dbReference type="GO" id="GO:0050570">
    <property type="term" value="F:4-hydroxythreonine-4-phosphate dehydrogenase activity"/>
    <property type="evidence" value="ECO:0000318"/>
    <property type="project" value="GO_Central"/>
</dbReference>
<dbReference type="GO" id="GO:0050897">
    <property type="term" value="F:cobalt ion binding"/>
    <property type="evidence" value="ECO:0007669"/>
    <property type="project" value="UniProtKB-UniRule"/>
</dbReference>
<dbReference type="GO" id="GO:0000287">
    <property type="term" value="F:magnesium ion binding"/>
    <property type="evidence" value="ECO:0007669"/>
    <property type="project" value="UniProtKB-UniRule"/>
</dbReference>
<dbReference type="GO" id="GO:0051287">
    <property type="term" value="F:NAD binding"/>
    <property type="evidence" value="ECO:0007669"/>
    <property type="project" value="InterPro"/>
</dbReference>
<dbReference type="GO" id="GO:0008270">
    <property type="term" value="F:zinc ion binding"/>
    <property type="evidence" value="ECO:0007669"/>
    <property type="project" value="UniProtKB-UniRule"/>
</dbReference>
<dbReference type="GO" id="GO:0042823">
    <property type="term" value="P:pyridoxal phosphate biosynthetic process"/>
    <property type="evidence" value="ECO:0000318"/>
    <property type="project" value="GO_Central"/>
</dbReference>
<dbReference type="GO" id="GO:0008615">
    <property type="term" value="P:pyridoxine biosynthetic process"/>
    <property type="evidence" value="ECO:0000318"/>
    <property type="project" value="GO_Central"/>
</dbReference>
<dbReference type="Gene3D" id="3.40.718.10">
    <property type="entry name" value="Isopropylmalate Dehydrogenase"/>
    <property type="match status" value="1"/>
</dbReference>
<dbReference type="HAMAP" id="MF_00536">
    <property type="entry name" value="PdxA"/>
    <property type="match status" value="1"/>
</dbReference>
<dbReference type="InterPro" id="IPR037510">
    <property type="entry name" value="PdxA"/>
</dbReference>
<dbReference type="InterPro" id="IPR005255">
    <property type="entry name" value="PdxA_fam"/>
</dbReference>
<dbReference type="NCBIfam" id="TIGR00557">
    <property type="entry name" value="pdxA"/>
    <property type="match status" value="1"/>
</dbReference>
<dbReference type="PANTHER" id="PTHR30004">
    <property type="entry name" value="4-HYDROXYTHREONINE-4-PHOSPHATE DEHYDROGENASE"/>
    <property type="match status" value="1"/>
</dbReference>
<dbReference type="PANTHER" id="PTHR30004:SF5">
    <property type="entry name" value="4-HYDROXYTHREONINE-4-PHOSPHATE DEHYDROGENASE"/>
    <property type="match status" value="1"/>
</dbReference>
<dbReference type="Pfam" id="PF04166">
    <property type="entry name" value="PdxA"/>
    <property type="match status" value="1"/>
</dbReference>
<dbReference type="SUPFAM" id="SSF53659">
    <property type="entry name" value="Isocitrate/Isopropylmalate dehydrogenase-like"/>
    <property type="match status" value="1"/>
</dbReference>
<organism>
    <name type="scientific">Neisseria meningitidis serogroup B (strain ATCC BAA-335 / MC58)</name>
    <dbReference type="NCBI Taxonomy" id="122586"/>
    <lineage>
        <taxon>Bacteria</taxon>
        <taxon>Pseudomonadati</taxon>
        <taxon>Pseudomonadota</taxon>
        <taxon>Betaproteobacteria</taxon>
        <taxon>Neisseriales</taxon>
        <taxon>Neisseriaceae</taxon>
        <taxon>Neisseria</taxon>
    </lineage>
</organism>
<comment type="function">
    <text evidence="1">Catalyzes the NAD(P)-dependent oxidation of 4-(phosphooxy)-L-threonine (HTP) into 2-amino-3-oxo-4-(phosphooxy)butyric acid which spontaneously decarboxylates to form 3-amino-2-oxopropyl phosphate (AHAP).</text>
</comment>
<comment type="catalytic activity">
    <reaction evidence="1">
        <text>4-(phosphooxy)-L-threonine + NAD(+) = 3-amino-2-oxopropyl phosphate + CO2 + NADH</text>
        <dbReference type="Rhea" id="RHEA:32275"/>
        <dbReference type="ChEBI" id="CHEBI:16526"/>
        <dbReference type="ChEBI" id="CHEBI:57279"/>
        <dbReference type="ChEBI" id="CHEBI:57540"/>
        <dbReference type="ChEBI" id="CHEBI:57945"/>
        <dbReference type="ChEBI" id="CHEBI:58452"/>
        <dbReference type="EC" id="1.1.1.262"/>
    </reaction>
</comment>
<comment type="cofactor">
    <cofactor evidence="1">
        <name>Zn(2+)</name>
        <dbReference type="ChEBI" id="CHEBI:29105"/>
    </cofactor>
    <cofactor evidence="1">
        <name>Mg(2+)</name>
        <dbReference type="ChEBI" id="CHEBI:18420"/>
    </cofactor>
    <cofactor evidence="1">
        <name>Co(2+)</name>
        <dbReference type="ChEBI" id="CHEBI:48828"/>
    </cofactor>
    <text evidence="1">Binds 1 divalent metal cation per subunit. Can use ions such as Zn(2+), Mg(2+) or Co(2+).</text>
</comment>
<comment type="pathway">
    <text evidence="1">Cofactor biosynthesis; pyridoxine 5'-phosphate biosynthesis; pyridoxine 5'-phosphate from D-erythrose 4-phosphate: step 4/5.</text>
</comment>
<comment type="subunit">
    <text evidence="1">Homodimer.</text>
</comment>
<comment type="subcellular location">
    <subcellularLocation>
        <location evidence="1">Cytoplasm</location>
    </subcellularLocation>
</comment>
<comment type="miscellaneous">
    <text evidence="1">The active site is located at the dimer interface.</text>
</comment>
<comment type="similarity">
    <text evidence="1">Belongs to the PdxA family.</text>
</comment>
<comment type="sequence caution" evidence="2">
    <conflict type="erroneous initiation">
        <sequence resource="EMBL-CDS" id="AAF40652"/>
    </conflict>
</comment>
<sequence>MKQPVFAVTSGEPAGIGPDICLDLAFARLPCRCAVLGDKNLLRARAEALGKSVVLRDFDPESGGAAYGELEVLHIPAVEAVEAGKLNPANAAYVLQLLDTALAGISDGIFDGIVTAPLHKGIINDARASTGFFSGHTEYLAEKSGTGQVVMMLAGKGLRVALVTTHLPLKDVAAAITQPLIESVARILHHDLKHKFGIKNPKILVAGLNPHAGEGGHLGHEETDTIIPALENLRREGINLAGPYPADTLFQPFMLEGADAVLAMYHDQGLPVLKYHSFGQGVNITLGLPFIRTSVDHGTALDLAATGRADSGSLITAVETAVEMARGSL</sequence>
<name>PDXA_NEIMB</name>
<proteinExistence type="inferred from homology"/>
<keyword id="KW-0170">Cobalt</keyword>
<keyword id="KW-0963">Cytoplasm</keyword>
<keyword id="KW-0460">Magnesium</keyword>
<keyword id="KW-0479">Metal-binding</keyword>
<keyword id="KW-0520">NAD</keyword>
<keyword id="KW-0521">NADP</keyword>
<keyword id="KW-0560">Oxidoreductase</keyword>
<keyword id="KW-0664">Pyridoxine biosynthesis</keyword>
<keyword id="KW-1185">Reference proteome</keyword>
<keyword id="KW-0862">Zinc</keyword>
<gene>
    <name evidence="1" type="primary">pdxA</name>
    <name type="ordered locus">NMB0195</name>
</gene>
<protein>
    <recommendedName>
        <fullName evidence="1">4-hydroxythreonine-4-phosphate dehydrogenase</fullName>
        <ecNumber evidence="1">1.1.1.262</ecNumber>
    </recommendedName>
    <alternativeName>
        <fullName evidence="1">4-(phosphohydroxy)-L-threonine dehydrogenase</fullName>
    </alternativeName>
</protein>
<feature type="chain" id="PRO_0000188812" description="4-hydroxythreonine-4-phosphate dehydrogenase">
    <location>
        <begin position="1"/>
        <end position="329"/>
    </location>
</feature>
<feature type="binding site" evidence="1">
    <location>
        <position position="136"/>
    </location>
    <ligand>
        <name>substrate</name>
    </ligand>
</feature>
<feature type="binding site" evidence="1">
    <location>
        <position position="137"/>
    </location>
    <ligand>
        <name>substrate</name>
    </ligand>
</feature>
<feature type="binding site" evidence="1">
    <location>
        <position position="166"/>
    </location>
    <ligand>
        <name>a divalent metal cation</name>
        <dbReference type="ChEBI" id="CHEBI:60240"/>
        <note>ligand shared between dimeric partners</note>
    </ligand>
</feature>
<feature type="binding site" evidence="1">
    <location>
        <position position="211"/>
    </location>
    <ligand>
        <name>a divalent metal cation</name>
        <dbReference type="ChEBI" id="CHEBI:60240"/>
        <note>ligand shared between dimeric partners</note>
    </ligand>
</feature>
<feature type="binding site" evidence="1">
    <location>
        <position position="266"/>
    </location>
    <ligand>
        <name>a divalent metal cation</name>
        <dbReference type="ChEBI" id="CHEBI:60240"/>
        <note>ligand shared between dimeric partners</note>
    </ligand>
</feature>
<feature type="binding site" evidence="1">
    <location>
        <position position="274"/>
    </location>
    <ligand>
        <name>substrate</name>
    </ligand>
</feature>
<feature type="binding site" evidence="1">
    <location>
        <position position="283"/>
    </location>
    <ligand>
        <name>substrate</name>
    </ligand>
</feature>
<feature type="binding site" evidence="1">
    <location>
        <position position="292"/>
    </location>
    <ligand>
        <name>substrate</name>
    </ligand>
</feature>